<proteinExistence type="inferred from homology"/>
<sequence length="946" mass="108046">MNEFLPDSCLLGVMLAVSSHSGPQVIYHYPPSNRILETARDAHMNQQLGTTGLKRETEGRSMKSRGHPGNWDMNSELDSDLHSSKMERTASSSSSSSLSSPSSGLSDSELSTDYADWSTSGSSSDSELDLQTPDDSRRSQLENAGARSTRNVSPVSMSRNTSLGREPKDNGQKISASKLLDILNDPKSQFTKINTNDTNDDQFNMEEDDDLIEFDYMTSEKRVDITEEFFTEANYQDTSKFFEFDIDFLAELCCPSREMCNTRFELTVDEYCFLGHPIHVDSSGNWRKSRKRNNSLSKSKRSGSLTGSRKRSGSKSSNHDKSFSAETPNSPESSKIIEEVGSLHKSRTLSNPQNDHFTKDMTMFHVCFIMDPNLIEYNKRVDDMYQYVVARLSVLLRYLQSKNDYVSEQCELILKEKEKVFKNSKHYKSLSLPSEKGRYLYQRLLAKSSLARALTECVEKIKKNEIACLEITDHRTVSLQIPIQNEFSILPQYKLYPVLKGSFLTSIQNNKFLEKSANIDDNHHAKSARDTNLISDHVNTFSNGQTKNEIFYSKNMENALTAQNDYDDDDLLLYSILLLDDPDKIIADLDNYSSNDDIGGVILKQLVKVIQPNVPLLSYQYIINELLAEKPLSSSTTANKSKQNKDNKTNTFYSALLRSCALHLIYWRHARAILPISFKNTYIVSPLSPVEADNSEMIKGNRKPSITDLNVTSNSSSKIPVIYLNQQSFKLKFPSLPSLPTFLNILSLGKPKAFGNIIPSKEHKPIYMAALIWLIQKGYLTQLLTFVYIRVDKKIKMKVDEDLEKEGFRTNRRRRQEDNVDNKLLSTDENANEPPKSTKVDINDNTLEGRDTEYDSDSFDYDDPEFNHDYTIILEPERATALEKRWIYKCIQDQPQDIKILFNKVMKYMNGRTAMETVMLKEHISRHDIKRLLTSLGNYIVELNHW</sequence>
<comment type="function">
    <text evidence="1">Mediates inactivation of the TORC1 complex in response to amino acid starvation. Required for meiotic nuclear division (By similarity).</text>
</comment>
<comment type="similarity">
    <text evidence="4">Belongs to the NPR3 family.</text>
</comment>
<dbReference type="EMBL" id="CR380951">
    <property type="protein sequence ID" value="CAG58762.1"/>
    <property type="molecule type" value="Genomic_DNA"/>
</dbReference>
<dbReference type="RefSeq" id="XP_445843.1">
    <property type="nucleotide sequence ID" value="XM_445843.1"/>
</dbReference>
<dbReference type="SMR" id="Q6FVA1"/>
<dbReference type="FunCoup" id="Q6FVA1">
    <property type="interactions" value="145"/>
</dbReference>
<dbReference type="STRING" id="284593.Q6FVA1"/>
<dbReference type="EnsemblFungi" id="CAGL0E03608g-T">
    <property type="protein sequence ID" value="CAGL0E03608g-T-p1"/>
    <property type="gene ID" value="CAGL0E03608g"/>
</dbReference>
<dbReference type="KEGG" id="cgr:2887419"/>
<dbReference type="CGD" id="CAL0129006">
    <property type="gene designation" value="CAGL0E03608g"/>
</dbReference>
<dbReference type="VEuPathDB" id="FungiDB:B1J91_E03608g"/>
<dbReference type="VEuPathDB" id="FungiDB:CAGL0E03608g"/>
<dbReference type="eggNOG" id="ENOG502QW35">
    <property type="taxonomic scope" value="Eukaryota"/>
</dbReference>
<dbReference type="HOGENOM" id="CLU_014314_0_0_1"/>
<dbReference type="InParanoid" id="Q6FVA1"/>
<dbReference type="OMA" id="RTDYVWK"/>
<dbReference type="Proteomes" id="UP000002428">
    <property type="component" value="Chromosome E"/>
</dbReference>
<dbReference type="GO" id="GO:1990130">
    <property type="term" value="C:GATOR1 complex"/>
    <property type="evidence" value="ECO:0007669"/>
    <property type="project" value="EnsemblFungi"/>
</dbReference>
<dbReference type="GO" id="GO:0034198">
    <property type="term" value="P:cellular response to amino acid starvation"/>
    <property type="evidence" value="ECO:0007669"/>
    <property type="project" value="EnsemblFungi"/>
</dbReference>
<dbReference type="GO" id="GO:0006995">
    <property type="term" value="P:cellular response to nitrogen starvation"/>
    <property type="evidence" value="ECO:0007669"/>
    <property type="project" value="EnsemblFungi"/>
</dbReference>
<dbReference type="GO" id="GO:0051321">
    <property type="term" value="P:meiotic cell cycle"/>
    <property type="evidence" value="ECO:0007669"/>
    <property type="project" value="UniProtKB-KW"/>
</dbReference>
<dbReference type="GO" id="GO:0051058">
    <property type="term" value="P:negative regulation of small GTPase mediated signal transduction"/>
    <property type="evidence" value="ECO:0007669"/>
    <property type="project" value="EnsemblFungi"/>
</dbReference>
<dbReference type="GO" id="GO:1904262">
    <property type="term" value="P:negative regulation of TORC1 signaling"/>
    <property type="evidence" value="ECO:0007669"/>
    <property type="project" value="EnsemblFungi"/>
</dbReference>
<dbReference type="GO" id="GO:0010508">
    <property type="term" value="P:positive regulation of autophagy"/>
    <property type="evidence" value="ECO:0007669"/>
    <property type="project" value="EnsemblFungi"/>
</dbReference>
<dbReference type="GO" id="GO:0007124">
    <property type="term" value="P:pseudohyphal growth"/>
    <property type="evidence" value="ECO:0007669"/>
    <property type="project" value="EnsemblFungi"/>
</dbReference>
<dbReference type="GO" id="GO:2000785">
    <property type="term" value="P:regulation of autophagosome assembly"/>
    <property type="evidence" value="ECO:0007669"/>
    <property type="project" value="EnsemblFungi"/>
</dbReference>
<dbReference type="GO" id="GO:0038202">
    <property type="term" value="P:TORC1 signaling"/>
    <property type="evidence" value="ECO:0007669"/>
    <property type="project" value="TreeGrafter"/>
</dbReference>
<dbReference type="InterPro" id="IPR056603">
    <property type="entry name" value="HTH_NPRL3"/>
</dbReference>
<dbReference type="InterPro" id="IPR005365">
    <property type="entry name" value="Npr3"/>
</dbReference>
<dbReference type="PANTHER" id="PTHR13153">
    <property type="entry name" value="CGTHBA PROTEIN -14 GENE PROTEIN"/>
    <property type="match status" value="1"/>
</dbReference>
<dbReference type="PANTHER" id="PTHR13153:SF5">
    <property type="entry name" value="GATOR COMPLEX PROTEIN NPRL3"/>
    <property type="match status" value="1"/>
</dbReference>
<dbReference type="Pfam" id="PF24064">
    <property type="entry name" value="HTH_NPRL3"/>
    <property type="match status" value="1"/>
</dbReference>
<dbReference type="Pfam" id="PF03666">
    <property type="entry name" value="NPR3"/>
    <property type="match status" value="1"/>
</dbReference>
<evidence type="ECO:0000250" key="1"/>
<evidence type="ECO:0000255" key="2"/>
<evidence type="ECO:0000256" key="3">
    <source>
        <dbReference type="SAM" id="MobiDB-lite"/>
    </source>
</evidence>
<evidence type="ECO:0000305" key="4"/>
<feature type="signal peptide" evidence="2">
    <location>
        <begin position="1"/>
        <end position="21"/>
    </location>
</feature>
<feature type="chain" id="PRO_0000301797" description="Nitrogen permease regulator 3">
    <location>
        <begin position="22"/>
        <end position="946"/>
    </location>
</feature>
<feature type="region of interest" description="Disordered" evidence="3">
    <location>
        <begin position="48"/>
        <end position="171"/>
    </location>
</feature>
<feature type="region of interest" description="Disordered" evidence="3">
    <location>
        <begin position="283"/>
        <end position="334"/>
    </location>
</feature>
<feature type="region of interest" description="Disordered" evidence="3">
    <location>
        <begin position="813"/>
        <end position="849"/>
    </location>
</feature>
<feature type="compositionally biased region" description="Basic and acidic residues" evidence="3">
    <location>
        <begin position="79"/>
        <end position="88"/>
    </location>
</feature>
<feature type="compositionally biased region" description="Low complexity" evidence="3">
    <location>
        <begin position="91"/>
        <end position="125"/>
    </location>
</feature>
<feature type="compositionally biased region" description="Polar residues" evidence="3">
    <location>
        <begin position="146"/>
        <end position="163"/>
    </location>
</feature>
<feature type="compositionally biased region" description="Basic residues" evidence="3">
    <location>
        <begin position="287"/>
        <end position="301"/>
    </location>
</feature>
<feature type="compositionally biased region" description="Polar residues" evidence="3">
    <location>
        <begin position="324"/>
        <end position="333"/>
    </location>
</feature>
<feature type="compositionally biased region" description="Basic and acidic residues" evidence="3">
    <location>
        <begin position="836"/>
        <end position="849"/>
    </location>
</feature>
<gene>
    <name type="primary">NPR3</name>
    <name type="synonym">RMD11</name>
    <name type="ordered locus">CAGL0E03608g</name>
</gene>
<accession>Q6FVA1</accession>
<keyword id="KW-0469">Meiosis</keyword>
<keyword id="KW-1185">Reference proteome</keyword>
<keyword id="KW-0732">Signal</keyword>
<name>NPR3_CANGA</name>
<protein>
    <recommendedName>
        <fullName>Nitrogen permease regulator 3</fullName>
    </recommendedName>
    <alternativeName>
        <fullName>Required for meiotic nuclear division protein 11</fullName>
    </alternativeName>
</protein>
<reference key="1">
    <citation type="journal article" date="2004" name="Nature">
        <title>Genome evolution in yeasts.</title>
        <authorList>
            <person name="Dujon B."/>
            <person name="Sherman D."/>
            <person name="Fischer G."/>
            <person name="Durrens P."/>
            <person name="Casaregola S."/>
            <person name="Lafontaine I."/>
            <person name="de Montigny J."/>
            <person name="Marck C."/>
            <person name="Neuveglise C."/>
            <person name="Talla E."/>
            <person name="Goffard N."/>
            <person name="Frangeul L."/>
            <person name="Aigle M."/>
            <person name="Anthouard V."/>
            <person name="Babour A."/>
            <person name="Barbe V."/>
            <person name="Barnay S."/>
            <person name="Blanchin S."/>
            <person name="Beckerich J.-M."/>
            <person name="Beyne E."/>
            <person name="Bleykasten C."/>
            <person name="Boisrame A."/>
            <person name="Boyer J."/>
            <person name="Cattolico L."/>
            <person name="Confanioleri F."/>
            <person name="de Daruvar A."/>
            <person name="Despons L."/>
            <person name="Fabre E."/>
            <person name="Fairhead C."/>
            <person name="Ferry-Dumazet H."/>
            <person name="Groppi A."/>
            <person name="Hantraye F."/>
            <person name="Hennequin C."/>
            <person name="Jauniaux N."/>
            <person name="Joyet P."/>
            <person name="Kachouri R."/>
            <person name="Kerrest A."/>
            <person name="Koszul R."/>
            <person name="Lemaire M."/>
            <person name="Lesur I."/>
            <person name="Ma L."/>
            <person name="Muller H."/>
            <person name="Nicaud J.-M."/>
            <person name="Nikolski M."/>
            <person name="Oztas S."/>
            <person name="Ozier-Kalogeropoulos O."/>
            <person name="Pellenz S."/>
            <person name="Potier S."/>
            <person name="Richard G.-F."/>
            <person name="Straub M.-L."/>
            <person name="Suleau A."/>
            <person name="Swennen D."/>
            <person name="Tekaia F."/>
            <person name="Wesolowski-Louvel M."/>
            <person name="Westhof E."/>
            <person name="Wirth B."/>
            <person name="Zeniou-Meyer M."/>
            <person name="Zivanovic Y."/>
            <person name="Bolotin-Fukuhara M."/>
            <person name="Thierry A."/>
            <person name="Bouchier C."/>
            <person name="Caudron B."/>
            <person name="Scarpelli C."/>
            <person name="Gaillardin C."/>
            <person name="Weissenbach J."/>
            <person name="Wincker P."/>
            <person name="Souciet J.-L."/>
        </authorList>
    </citation>
    <scope>NUCLEOTIDE SEQUENCE [LARGE SCALE GENOMIC DNA]</scope>
    <source>
        <strain>ATCC 2001 / BCRC 20586 / JCM 3761 / NBRC 0622 / NRRL Y-65 / CBS 138</strain>
    </source>
</reference>
<organism>
    <name type="scientific">Candida glabrata (strain ATCC 2001 / BCRC 20586 / JCM 3761 / NBRC 0622 / NRRL Y-65 / CBS 138)</name>
    <name type="common">Yeast</name>
    <name type="synonym">Nakaseomyces glabratus</name>
    <dbReference type="NCBI Taxonomy" id="284593"/>
    <lineage>
        <taxon>Eukaryota</taxon>
        <taxon>Fungi</taxon>
        <taxon>Dikarya</taxon>
        <taxon>Ascomycota</taxon>
        <taxon>Saccharomycotina</taxon>
        <taxon>Saccharomycetes</taxon>
        <taxon>Saccharomycetales</taxon>
        <taxon>Saccharomycetaceae</taxon>
        <taxon>Nakaseomyces</taxon>
    </lineage>
</organism>